<name>NEF_HV193</name>
<organism>
    <name type="scientific">Human immunodeficiency virus type 1 group M subtype F1 (isolate 93BR020)</name>
    <name type="common">HIV-1</name>
    <dbReference type="NCBI Taxonomy" id="388814"/>
    <lineage>
        <taxon>Viruses</taxon>
        <taxon>Riboviria</taxon>
        <taxon>Pararnavirae</taxon>
        <taxon>Artverviricota</taxon>
        <taxon>Revtraviricetes</taxon>
        <taxon>Ortervirales</taxon>
        <taxon>Retroviridae</taxon>
        <taxon>Orthoretrovirinae</taxon>
        <taxon>Lentivirus</taxon>
        <taxon>Human immunodeficiency virus type 1</taxon>
    </lineage>
</organism>
<evidence type="ECO:0000255" key="1">
    <source>
        <dbReference type="HAMAP-Rule" id="MF_04078"/>
    </source>
</evidence>
<evidence type="ECO:0000256" key="2">
    <source>
        <dbReference type="SAM" id="MobiDB-lite"/>
    </source>
</evidence>
<dbReference type="EMBL" id="AF005494">
    <property type="protein sequence ID" value="AAD03166.1"/>
    <property type="molecule type" value="Genomic_DNA"/>
</dbReference>
<dbReference type="SMR" id="O89293"/>
<dbReference type="DIP" id="DIP-60908N"/>
<dbReference type="IntAct" id="O89293">
    <property type="interactions" value="1"/>
</dbReference>
<dbReference type="Proteomes" id="UP000007687">
    <property type="component" value="Segment"/>
</dbReference>
<dbReference type="GO" id="GO:0005576">
    <property type="term" value="C:extracellular region"/>
    <property type="evidence" value="ECO:0007669"/>
    <property type="project" value="UniProtKB-SubCell"/>
</dbReference>
<dbReference type="GO" id="GO:0044178">
    <property type="term" value="C:host cell Golgi membrane"/>
    <property type="evidence" value="ECO:0007669"/>
    <property type="project" value="UniProtKB-SubCell"/>
</dbReference>
<dbReference type="GO" id="GO:0020002">
    <property type="term" value="C:host cell plasma membrane"/>
    <property type="evidence" value="ECO:0007669"/>
    <property type="project" value="UniProtKB-SubCell"/>
</dbReference>
<dbReference type="GO" id="GO:0016020">
    <property type="term" value="C:membrane"/>
    <property type="evidence" value="ECO:0007669"/>
    <property type="project" value="UniProtKB-UniRule"/>
</dbReference>
<dbReference type="GO" id="GO:0044423">
    <property type="term" value="C:virion component"/>
    <property type="evidence" value="ECO:0007669"/>
    <property type="project" value="UniProtKB-UniRule"/>
</dbReference>
<dbReference type="GO" id="GO:0005525">
    <property type="term" value="F:GTP binding"/>
    <property type="evidence" value="ECO:0007669"/>
    <property type="project" value="UniProtKB-UniRule"/>
</dbReference>
<dbReference type="GO" id="GO:0017124">
    <property type="term" value="F:SH3 domain binding"/>
    <property type="evidence" value="ECO:0007669"/>
    <property type="project" value="UniProtKB-UniRule"/>
</dbReference>
<dbReference type="GO" id="GO:0046776">
    <property type="term" value="P:symbiont-mediated suppression of host antigen processing and presentation of peptide antigen via MHC class I"/>
    <property type="evidence" value="ECO:0007669"/>
    <property type="project" value="UniProtKB-UniRule"/>
</dbReference>
<dbReference type="GO" id="GO:0039505">
    <property type="term" value="P:symbiont-mediated suppression of host antigen processing and presentation of peptide antigen via MHC class II"/>
    <property type="evidence" value="ECO:0007669"/>
    <property type="project" value="UniProtKB-UniRule"/>
</dbReference>
<dbReference type="GO" id="GO:0140321">
    <property type="term" value="P:symbiont-mediated suppression of host autophagy"/>
    <property type="evidence" value="ECO:0007669"/>
    <property type="project" value="UniProtKB-KW"/>
</dbReference>
<dbReference type="Gene3D" id="4.10.890.10">
    <property type="entry name" value="HIV 1 nef anchor domain"/>
    <property type="match status" value="1"/>
</dbReference>
<dbReference type="Gene3D" id="3.30.62.10">
    <property type="entry name" value="Nef Regulatory Factor"/>
    <property type="match status" value="1"/>
</dbReference>
<dbReference type="HAMAP" id="MF_04078">
    <property type="entry name" value="NEF_HIV"/>
    <property type="match status" value="1"/>
</dbReference>
<dbReference type="InterPro" id="IPR027480">
    <property type="entry name" value="HIV-1_Nef_anchor_sf"/>
</dbReference>
<dbReference type="InterPro" id="IPR027481">
    <property type="entry name" value="HIV-1_Nef_core_sf"/>
</dbReference>
<dbReference type="InterPro" id="IPR001558">
    <property type="entry name" value="HIV_Nef"/>
</dbReference>
<dbReference type="Pfam" id="PF00469">
    <property type="entry name" value="F-protein"/>
    <property type="match status" value="1"/>
</dbReference>
<dbReference type="SUPFAM" id="SSF55671">
    <property type="entry name" value="Regulatory factor Nef"/>
    <property type="match status" value="1"/>
</dbReference>
<feature type="initiator methionine" description="Removed; by host" evidence="1">
    <location>
        <position position="1"/>
    </location>
</feature>
<feature type="chain" id="PRO_0000244789" description="Protein Nef" evidence="1">
    <location>
        <begin position="2"/>
        <end position="208"/>
    </location>
</feature>
<feature type="chain" id="PRO_0000244790" description="C-terminal core protein" evidence="1">
    <location>
        <begin position="61"/>
        <end position="208"/>
    </location>
</feature>
<feature type="region of interest" description="Disordered" evidence="2">
    <location>
        <begin position="16"/>
        <end position="51"/>
    </location>
</feature>
<feature type="region of interest" description="Acidic; interacts with host PACS1 and PACS2; stabilizes the interaction of NEF/MHC-I with host AP1M1; necessary for MHC-I internalization" evidence="1">
    <location>
        <begin position="65"/>
        <end position="68"/>
    </location>
</feature>
<feature type="region of interest" description="SH3-binding; interaction with Src family tyrosine kinases" evidence="1">
    <location>
        <begin position="72"/>
        <end position="81"/>
    </location>
</feature>
<feature type="region of interest" description="Mediates dimerization, Nef-PTE1 interaction" evidence="1">
    <location>
        <begin position="111"/>
        <end position="127"/>
    </location>
</feature>
<feature type="region of interest" description="Binding to ATP6V1H" evidence="1">
    <location>
        <begin position="151"/>
        <end position="183"/>
    </location>
</feature>
<feature type="short sequence motif" description="PxxP; stabilizes the interaction of NEF/MHC-I with host AP1M1; necessary for MHC-I internalization" evidence="1">
    <location>
        <begin position="75"/>
        <end position="78"/>
    </location>
</feature>
<feature type="short sequence motif" description="Dileucine internalization motif; necessary for CD4 internalization" evidence="1">
    <location>
        <begin position="167"/>
        <end position="168"/>
    </location>
</feature>
<feature type="short sequence motif" description="Diacidic; necessary for CD4 internalization" evidence="1">
    <location>
        <begin position="177"/>
        <end position="178"/>
    </location>
</feature>
<feature type="site" description="Might play a role in AP-1 recruitment to the Nef-MHC-I complex" evidence="1">
    <location>
        <position position="20"/>
    </location>
</feature>
<feature type="site" description="Cleavage; by viral protease" evidence="1">
    <location>
        <begin position="60"/>
        <end position="61"/>
    </location>
</feature>
<feature type="modified residue" description="Phosphoserine; by host" evidence="1">
    <location>
        <position position="6"/>
    </location>
</feature>
<feature type="lipid moiety-binding region" description="N-myristoyl glycine; by host" evidence="1">
    <location>
        <position position="2"/>
    </location>
</feature>
<comment type="function">
    <text evidence="1">Factor of infectivity and pathogenicity, required for optimal virus replication. Alters numerous pathways of T-lymphocyte function and down-regulates immunity surface molecules in order to evade host defense and increase viral infectivity. Alters the functionality of other immunity cells, like dendritic cells, monocytes/macrophages and NK cells.</text>
</comment>
<comment type="function">
    <text evidence="1">In infected CD4(+) T-lymphocytes, down-regulates the surface MHC-I, mature MHC-II, CD4, CD28, CCR5 and CXCR4 molecules. Mediates internalization and degradation of host CD4 through the interaction of with the cytoplasmic tail of CD4, the recruitment of AP-2 (clathrin adapter protein complex 2), internalization through clathrin coated pits, and subsequent transport to endosomes and lysosomes for degradation. Diverts host MHC-I molecules to the trans-Golgi network-associated endosomal compartments by an endocytic pathway to finally target them for degradation. MHC-I down-regulation may involve AP-1 (clathrin adapter protein complex 1) or possibly Src family kinase-ZAP70/Syk-PI3K cascade recruited by PACS2. In consequence infected cells are masked for immune recognition by cytotoxic T-lymphocytes. Decreasing the number of immune receptors also prevents reinfection by more HIV particles (superinfection). Down-regulates host SERINC3 and SERINC5 thereby excluding these proteins from the viral particles. Virion infectivity is drastically higher when SERINC3 or SERINC5 are excluded from the viral envelope, because these host antiviral proteins impair the membrane fusion event necessary for subsequent virion penetration.</text>
</comment>
<comment type="function">
    <text evidence="1">Bypasses host T-cell signaling by inducing a transcriptional program nearly identical to that of anti-CD3 cell activation. Interaction with TCR-zeta chain up-regulates the Fas ligand (FasL). Increasing surface FasL molecules and decreasing surface MHC-I molecules on infected CD4(+) cells send attacking cytotoxic CD8+ T-lymphocytes into apoptosis.</text>
</comment>
<comment type="function">
    <text evidence="1">Plays a role in optimizing the host cell environment for viral replication without causing cell death by apoptosis. Protects the infected cells from apoptosis in order to keep them alive until the next virus generation is ready to strike. Inhibits the Fas and TNFR-mediated death signals by blocking MAP3K5/ASK1. Decreases the half-life of TP53, protecting the infected cell against p53-mediated apoptosis. Inhibits the apoptotic signals regulated by the Bcl-2 family proteins through the formation of a Nef/PI3-kinase/PAK2 complex that leads to activation of PAK2 and induces phosphorylation of host BAD.</text>
</comment>
<comment type="function">
    <text evidence="1">Extracellular Nef protein targets CD4(+) T-lymphocytes for apoptosis by interacting with CXCR4 surface receptors.</text>
</comment>
<comment type="subunit">
    <text evidence="1">Monomer; cytosolic form. Homodimer; membrane bound form. Interacts with Nef associated p21-activated kinase (PAK2); this interaction activates PAK2. Associates with the Nef-MHC-I-AP1 complex; this complex is required for MHC-I internalization. Interacts (via C-terminus) with host PI3-kinase. Interacts with host PACS1; this interaction seems to be weak. Interacts with host PACS2. Interacts with host LCK and MAPK3; these interactions inhibit the kinase activity of the latter. Interacts with host ATP6V1H; this interaction may play a role in CD4 endocytosis. Associates with the CD4-Nef-AP2 complex; this complex is required for CD4 internalization. Interacts with host AP2 subunit alpha and AP2 subunit sigma2. Interacts with TCR-zeta chain; this interaction up-regulates the Fas ligand (FasL) surface expression. Interacts with host HCK, LYN, and SRC; these interactions activate the Src family kinases. Interacts with MAP3K5; this interaction inhibits the Fas and TNFR-mediated death signals. Interacts with beta-COP and PTE1. Interacts with human RACK1; this increases Nef phosphorylation by PKC. Interacts with TP53; this interaction decreases the half-life of TP53, protecting the infected cell against p53-mediated apoptosis.</text>
</comment>
<comment type="subcellular location">
    <subcellularLocation>
        <location evidence="1">Host cell membrane</location>
        <topology evidence="1">Lipid-anchor</topology>
        <orientation evidence="1">Cytoplasmic side</orientation>
    </subcellularLocation>
    <subcellularLocation>
        <location evidence="1">Virion</location>
    </subcellularLocation>
    <subcellularLocation>
        <location evidence="1">Secreted</location>
    </subcellularLocation>
    <subcellularLocation>
        <location evidence="1">Host Golgi apparatus membrane</location>
    </subcellularLocation>
    <text evidence="1">TGN localization requires PACS1. Associates with the inner plasma membrane through its N-terminal domain. Nef stimulates its own export via the release of exosomes. Incorporated in virions at a rate of about 10 molecules per virion, where it is cleaved.</text>
</comment>
<comment type="induction">
    <text evidence="1">Expressed early in the viral replication cycle.</text>
</comment>
<comment type="domain">
    <text evidence="1">The N-terminal domain is composed of the N-myristoyl glycine and of a cluster of positively charged amino acids. It is required for inner plasma membrane targeting of Nef and virion incorporation, and thereby for infectivity. This domain is also involved in binding to TP53.</text>
</comment>
<comment type="domain">
    <text evidence="1">The SH3-binding domain constituted of PxxP motifs mediates binding to several Src family proteins thereby regulating their tyrosine kinase activity. The same motifs also mediates the association with MAPK3, PI3-kinase and TCR-zeta.</text>
</comment>
<comment type="domain">
    <text evidence="1">The dileucine internalization motif and a diacidic motif seem to be required for binding to AP-2.</text>
</comment>
<comment type="domain">
    <text evidence="1">The acidic region binds to the sorting protein PACS-2, which targets Nef to the paranuclear region, enabling the PxxP motif to direct assembly of an SFK/ZAP-70/PI3K complex that accelerates endocytosis of cell-surface MHC-I.</text>
</comment>
<comment type="PTM">
    <text evidence="1">The virion-associated Nef proteins are cleaved by the viral protease to release the soluble C-terminal core protein. Nef is probably cleaved concomitantly with viral structural proteins on maturation of virus particles.</text>
</comment>
<comment type="PTM">
    <text evidence="1">Myristoylated.</text>
</comment>
<comment type="PTM">
    <text evidence="1">Phosphorylated on serine residues, probably by host PKCdelta and theta.</text>
</comment>
<comment type="miscellaneous">
    <text evidence="1">HIV-1 lineages are divided in three main groups, M (for Major), O (for Outlier), and N (for New, or Non-M, Non-O). The vast majority of strains found worldwide belong to the group M. Group O seems to be endemic to and largely confined to Cameroon and neighboring countries in West Central Africa, where these viruses represent a small minority of HIV-1 strains. The group N is represented by a limited number of isolates from Cameroonian persons. The group M is further subdivided in 9 clades or subtypes (A to D, F to H, J and K).</text>
</comment>
<comment type="similarity">
    <text evidence="1">Belongs to the lentivirus primate group Nef protein family.</text>
</comment>
<keyword id="KW-0014">AIDS</keyword>
<keyword id="KW-0053">Apoptosis</keyword>
<keyword id="KW-0244">Early protein</keyword>
<keyword id="KW-1032">Host cell membrane</keyword>
<keyword id="KW-1040">Host Golgi apparatus</keyword>
<keyword id="KW-1043">Host membrane</keyword>
<keyword id="KW-0945">Host-virus interaction</keyword>
<keyword id="KW-1080">Inhibition of host adaptive immune response by virus</keyword>
<keyword id="KW-1083">Inhibition of host autophagy by virus</keyword>
<keyword id="KW-1115">Inhibition of host MHC class I molecule presentation by virus</keyword>
<keyword id="KW-1116">Inhibition of host MHC class II molecule presentation by virus</keyword>
<keyword id="KW-0449">Lipoprotein</keyword>
<keyword id="KW-0472">Membrane</keyword>
<keyword id="KW-0519">Myristate</keyword>
<keyword id="KW-0597">Phosphoprotein</keyword>
<keyword id="KW-1185">Reference proteome</keyword>
<keyword id="KW-0964">Secreted</keyword>
<keyword id="KW-0729">SH3-binding</keyword>
<keyword id="KW-0899">Viral immunoevasion</keyword>
<keyword id="KW-0946">Virion</keyword>
<keyword id="KW-0843">Virulence</keyword>
<accession>O89293</accession>
<gene>
    <name evidence="1" type="primary">nef</name>
</gene>
<organismHost>
    <name type="scientific">Homo sapiens</name>
    <name type="common">Human</name>
    <dbReference type="NCBI Taxonomy" id="9606"/>
</organismHost>
<reference key="1">
    <citation type="journal article" date="1998" name="J. Virol.">
        <title>A comprehensive panel of near-full-length clones and reference sequences for non-subtype B isolates of human immunodeficiency virus type 1.</title>
        <authorList>
            <person name="Gao F."/>
            <person name="Robertson D.L."/>
            <person name="Carruthers C.D."/>
            <person name="Morrison S.G."/>
            <person name="Jian B."/>
            <person name="Chen Y."/>
            <person name="Barre-Sinoussi F."/>
            <person name="Girard M."/>
            <person name="Srinivasan A."/>
            <person name="Abimiku A.G."/>
            <person name="Shaw G.M."/>
            <person name="Sharp P.M."/>
            <person name="Hahn B.H."/>
        </authorList>
    </citation>
    <scope>NUCLEOTIDE SEQUENCE [GENOMIC DNA]</scope>
</reference>
<proteinExistence type="inferred from homology"/>
<protein>
    <recommendedName>
        <fullName evidence="1">Protein Nef</fullName>
    </recommendedName>
    <alternativeName>
        <fullName evidence="1">3'ORF</fullName>
    </alternativeName>
    <alternativeName>
        <fullName evidence="1">Negative factor</fullName>
        <shortName evidence="1">F-protein</shortName>
    </alternativeName>
    <component>
        <recommendedName>
            <fullName evidence="1">C-terminal core protein</fullName>
        </recommendedName>
    </component>
</protein>
<sequence>MGGKWSKSSIVGWPAIRERMRRTPPTPPAAEGVGAVSQDLERRGAITSSNTRANNPDLAWLEAQEEDEVGFPVRPQVPLRPMTYKGAVDLSHFLKEKGGLEGLIYSKRRQEILDLWVYHTQGYFPDWQNYTPGPGIRYPLTMGWCFKLVPVDPEEVEKANEGENNCLLHPMSQHGMEDEDKEVLKWEFDSRLALRHIARERHPEYYQD</sequence>